<feature type="chain" id="PRO_0000369731" description="Ribosomal RNA small subunit methyltransferase C">
    <location>
        <begin position="1"/>
        <end position="337"/>
    </location>
</feature>
<comment type="function">
    <text evidence="1">Specifically methylates the guanine in position 1207 of 16S rRNA in the 30S particle.</text>
</comment>
<comment type="catalytic activity">
    <reaction evidence="1">
        <text>guanosine(1207) in 16S rRNA + S-adenosyl-L-methionine = N(2)-methylguanosine(1207) in 16S rRNA + S-adenosyl-L-homocysteine + H(+)</text>
        <dbReference type="Rhea" id="RHEA:42736"/>
        <dbReference type="Rhea" id="RHEA-COMP:10213"/>
        <dbReference type="Rhea" id="RHEA-COMP:10214"/>
        <dbReference type="ChEBI" id="CHEBI:15378"/>
        <dbReference type="ChEBI" id="CHEBI:57856"/>
        <dbReference type="ChEBI" id="CHEBI:59789"/>
        <dbReference type="ChEBI" id="CHEBI:74269"/>
        <dbReference type="ChEBI" id="CHEBI:74481"/>
        <dbReference type="EC" id="2.1.1.172"/>
    </reaction>
</comment>
<comment type="subunit">
    <text evidence="1">Monomer.</text>
</comment>
<comment type="subcellular location">
    <subcellularLocation>
        <location evidence="1">Cytoplasm</location>
    </subcellularLocation>
</comment>
<comment type="similarity">
    <text evidence="1">Belongs to the methyltransferase superfamily. RsmC family.</text>
</comment>
<accession>B4EWW4</accession>
<keyword id="KW-0963">Cytoplasm</keyword>
<keyword id="KW-0489">Methyltransferase</keyword>
<keyword id="KW-1185">Reference proteome</keyword>
<keyword id="KW-0698">rRNA processing</keyword>
<keyword id="KW-0949">S-adenosyl-L-methionine</keyword>
<keyword id="KW-0808">Transferase</keyword>
<sequence>MSSLSPASEVILRHLDHFADRHVLIAGDLQDTLASQIQAKSVRAYTNQYHQWLPLLKSMGDNAFFGLAADQSFVKYCDTLIYFWPKNKNEATFQLRSLCASLSVGTEIFIVGENRSGVKSATELMNGIAKLKKIDSARRCSLFFGSLTYQTLFDRNNWWQTYRYDDLTVMALPGVFSQTALDEGSRLLLSTFDDAMVGDLLDMACGCGVIATVLGKKNPMLKLTLCDVNAAAISSSIATLNVNELEGRVIASNVYSAVEETYDWIVSNPPFHDGLGTSYQAAEDIIRLAPNFLKKGGKLRIVANAFLPYQDILDHVFGSHEVLASTGKFKVYQATKK</sequence>
<dbReference type="EC" id="2.1.1.172" evidence="1"/>
<dbReference type="EMBL" id="AM942759">
    <property type="protein sequence ID" value="CAR44934.1"/>
    <property type="molecule type" value="Genomic_DNA"/>
</dbReference>
<dbReference type="RefSeq" id="WP_012368406.1">
    <property type="nucleotide sequence ID" value="NC_010554.1"/>
</dbReference>
<dbReference type="SMR" id="B4EWW4"/>
<dbReference type="EnsemblBacteria" id="CAR44934">
    <property type="protein sequence ID" value="CAR44934"/>
    <property type="gene ID" value="PMI2496"/>
</dbReference>
<dbReference type="GeneID" id="6802441"/>
<dbReference type="KEGG" id="pmr:PMI2496"/>
<dbReference type="PATRIC" id="fig|529507.6.peg.2438"/>
<dbReference type="eggNOG" id="COG2813">
    <property type="taxonomic scope" value="Bacteria"/>
</dbReference>
<dbReference type="HOGENOM" id="CLU_049581_0_1_6"/>
<dbReference type="Proteomes" id="UP000008319">
    <property type="component" value="Chromosome"/>
</dbReference>
<dbReference type="GO" id="GO:0005737">
    <property type="term" value="C:cytoplasm"/>
    <property type="evidence" value="ECO:0007669"/>
    <property type="project" value="UniProtKB-SubCell"/>
</dbReference>
<dbReference type="GO" id="GO:0052914">
    <property type="term" value="F:16S rRNA (guanine(1207)-N(2))-methyltransferase activity"/>
    <property type="evidence" value="ECO:0007669"/>
    <property type="project" value="UniProtKB-EC"/>
</dbReference>
<dbReference type="GO" id="GO:0003676">
    <property type="term" value="F:nucleic acid binding"/>
    <property type="evidence" value="ECO:0007669"/>
    <property type="project" value="InterPro"/>
</dbReference>
<dbReference type="CDD" id="cd02440">
    <property type="entry name" value="AdoMet_MTases"/>
    <property type="match status" value="1"/>
</dbReference>
<dbReference type="Gene3D" id="3.40.50.150">
    <property type="entry name" value="Vaccinia Virus protein VP39"/>
    <property type="match status" value="2"/>
</dbReference>
<dbReference type="HAMAP" id="MF_01862">
    <property type="entry name" value="16SrRNA_methyltr_C"/>
    <property type="match status" value="1"/>
</dbReference>
<dbReference type="InterPro" id="IPR002052">
    <property type="entry name" value="DNA_methylase_N6_adenine_CS"/>
</dbReference>
<dbReference type="InterPro" id="IPR013675">
    <property type="entry name" value="Mtase_sm_N"/>
</dbReference>
<dbReference type="InterPro" id="IPR023543">
    <property type="entry name" value="rRNA_ssu_MeTfrase_C"/>
</dbReference>
<dbReference type="InterPro" id="IPR046977">
    <property type="entry name" value="RsmC/RlmG"/>
</dbReference>
<dbReference type="InterPro" id="IPR029063">
    <property type="entry name" value="SAM-dependent_MTases_sf"/>
</dbReference>
<dbReference type="InterPro" id="IPR007848">
    <property type="entry name" value="Small_mtfrase_dom"/>
</dbReference>
<dbReference type="NCBIfam" id="NF007023">
    <property type="entry name" value="PRK09489.1"/>
    <property type="match status" value="1"/>
</dbReference>
<dbReference type="PANTHER" id="PTHR47816">
    <property type="entry name" value="RIBOSOMAL RNA SMALL SUBUNIT METHYLTRANSFERASE C"/>
    <property type="match status" value="1"/>
</dbReference>
<dbReference type="PANTHER" id="PTHR47816:SF4">
    <property type="entry name" value="RIBOSOMAL RNA SMALL SUBUNIT METHYLTRANSFERASE C"/>
    <property type="match status" value="1"/>
</dbReference>
<dbReference type="Pfam" id="PF05175">
    <property type="entry name" value="MTS"/>
    <property type="match status" value="1"/>
</dbReference>
<dbReference type="Pfam" id="PF08468">
    <property type="entry name" value="MTS_N"/>
    <property type="match status" value="1"/>
</dbReference>
<dbReference type="SUPFAM" id="SSF53335">
    <property type="entry name" value="S-adenosyl-L-methionine-dependent methyltransferases"/>
    <property type="match status" value="1"/>
</dbReference>
<proteinExistence type="inferred from homology"/>
<organism>
    <name type="scientific">Proteus mirabilis (strain HI4320)</name>
    <dbReference type="NCBI Taxonomy" id="529507"/>
    <lineage>
        <taxon>Bacteria</taxon>
        <taxon>Pseudomonadati</taxon>
        <taxon>Pseudomonadota</taxon>
        <taxon>Gammaproteobacteria</taxon>
        <taxon>Enterobacterales</taxon>
        <taxon>Morganellaceae</taxon>
        <taxon>Proteus</taxon>
    </lineage>
</organism>
<protein>
    <recommendedName>
        <fullName evidence="1">Ribosomal RNA small subunit methyltransferase C</fullName>
        <ecNumber evidence="1">2.1.1.172</ecNumber>
    </recommendedName>
    <alternativeName>
        <fullName evidence="1">16S rRNA m2G1207 methyltransferase</fullName>
    </alternativeName>
    <alternativeName>
        <fullName evidence="1">rRNA (guanine-N(2)-)-methyltransferase RsmC</fullName>
    </alternativeName>
</protein>
<evidence type="ECO:0000255" key="1">
    <source>
        <dbReference type="HAMAP-Rule" id="MF_01862"/>
    </source>
</evidence>
<gene>
    <name evidence="1" type="primary">rsmC</name>
    <name type="ordered locus">PMI2496</name>
</gene>
<name>RSMC_PROMH</name>
<reference key="1">
    <citation type="journal article" date="2008" name="J. Bacteriol.">
        <title>Complete genome sequence of uropathogenic Proteus mirabilis, a master of both adherence and motility.</title>
        <authorList>
            <person name="Pearson M.M."/>
            <person name="Sebaihia M."/>
            <person name="Churcher C."/>
            <person name="Quail M.A."/>
            <person name="Seshasayee A.S."/>
            <person name="Luscombe N.M."/>
            <person name="Abdellah Z."/>
            <person name="Arrosmith C."/>
            <person name="Atkin B."/>
            <person name="Chillingworth T."/>
            <person name="Hauser H."/>
            <person name="Jagels K."/>
            <person name="Moule S."/>
            <person name="Mungall K."/>
            <person name="Norbertczak H."/>
            <person name="Rabbinowitsch E."/>
            <person name="Walker D."/>
            <person name="Whithead S."/>
            <person name="Thomson N.R."/>
            <person name="Rather P.N."/>
            <person name="Parkhill J."/>
            <person name="Mobley H.L.T."/>
        </authorList>
    </citation>
    <scope>NUCLEOTIDE SEQUENCE [LARGE SCALE GENOMIC DNA]</scope>
    <source>
        <strain>HI4320</strain>
    </source>
</reference>